<organism>
    <name type="scientific">Limosilactobacillus reuteri (strain DSM 20016)</name>
    <name type="common">Lactobacillus reuteri</name>
    <dbReference type="NCBI Taxonomy" id="557436"/>
    <lineage>
        <taxon>Bacteria</taxon>
        <taxon>Bacillati</taxon>
        <taxon>Bacillota</taxon>
        <taxon>Bacilli</taxon>
        <taxon>Lactobacillales</taxon>
        <taxon>Lactobacillaceae</taxon>
        <taxon>Limosilactobacillus</taxon>
    </lineage>
</organism>
<keyword id="KW-1185">Reference proteome</keyword>
<keyword id="KW-0686">Riboflavin biosynthesis</keyword>
<keyword id="KW-0808">Transferase</keyword>
<dbReference type="EC" id="2.5.1.78" evidence="1"/>
<dbReference type="EMBL" id="CP000705">
    <property type="protein sequence ID" value="ABQ83144.1"/>
    <property type="molecule type" value="Genomic_DNA"/>
</dbReference>
<dbReference type="RefSeq" id="WP_003667949.1">
    <property type="nucleotide sequence ID" value="NC_009513.1"/>
</dbReference>
<dbReference type="SMR" id="A5VJX0"/>
<dbReference type="STRING" id="557436.Lreu_0881"/>
<dbReference type="KEGG" id="lre:Lreu_0881"/>
<dbReference type="PATRIC" id="fig|557436.17.peg.1678"/>
<dbReference type="eggNOG" id="COG0054">
    <property type="taxonomic scope" value="Bacteria"/>
</dbReference>
<dbReference type="HOGENOM" id="CLU_089358_1_1_9"/>
<dbReference type="UniPathway" id="UPA00275">
    <property type="reaction ID" value="UER00404"/>
</dbReference>
<dbReference type="Proteomes" id="UP000001991">
    <property type="component" value="Chromosome"/>
</dbReference>
<dbReference type="GO" id="GO:0005829">
    <property type="term" value="C:cytosol"/>
    <property type="evidence" value="ECO:0007669"/>
    <property type="project" value="TreeGrafter"/>
</dbReference>
<dbReference type="GO" id="GO:0009349">
    <property type="term" value="C:riboflavin synthase complex"/>
    <property type="evidence" value="ECO:0007669"/>
    <property type="project" value="InterPro"/>
</dbReference>
<dbReference type="GO" id="GO:0000906">
    <property type="term" value="F:6,7-dimethyl-8-ribityllumazine synthase activity"/>
    <property type="evidence" value="ECO:0007669"/>
    <property type="project" value="UniProtKB-UniRule"/>
</dbReference>
<dbReference type="GO" id="GO:0009231">
    <property type="term" value="P:riboflavin biosynthetic process"/>
    <property type="evidence" value="ECO:0007669"/>
    <property type="project" value="UniProtKB-UniRule"/>
</dbReference>
<dbReference type="CDD" id="cd09209">
    <property type="entry name" value="Lumazine_synthase-I"/>
    <property type="match status" value="1"/>
</dbReference>
<dbReference type="Gene3D" id="3.40.50.960">
    <property type="entry name" value="Lumazine/riboflavin synthase"/>
    <property type="match status" value="1"/>
</dbReference>
<dbReference type="HAMAP" id="MF_00178">
    <property type="entry name" value="Lumazine_synth"/>
    <property type="match status" value="1"/>
</dbReference>
<dbReference type="InterPro" id="IPR034964">
    <property type="entry name" value="LS"/>
</dbReference>
<dbReference type="InterPro" id="IPR002180">
    <property type="entry name" value="LS/RS"/>
</dbReference>
<dbReference type="InterPro" id="IPR036467">
    <property type="entry name" value="LS/RS_sf"/>
</dbReference>
<dbReference type="NCBIfam" id="TIGR00114">
    <property type="entry name" value="lumazine-synth"/>
    <property type="match status" value="1"/>
</dbReference>
<dbReference type="PANTHER" id="PTHR21058:SF0">
    <property type="entry name" value="6,7-DIMETHYL-8-RIBITYLLUMAZINE SYNTHASE"/>
    <property type="match status" value="1"/>
</dbReference>
<dbReference type="PANTHER" id="PTHR21058">
    <property type="entry name" value="6,7-DIMETHYL-8-RIBITYLLUMAZINE SYNTHASE DMRL SYNTHASE LUMAZINE SYNTHASE"/>
    <property type="match status" value="1"/>
</dbReference>
<dbReference type="Pfam" id="PF00885">
    <property type="entry name" value="DMRL_synthase"/>
    <property type="match status" value="1"/>
</dbReference>
<dbReference type="SUPFAM" id="SSF52121">
    <property type="entry name" value="Lumazine synthase"/>
    <property type="match status" value="1"/>
</dbReference>
<sequence length="152" mass="16637">MKEFTGKFNVQSAEIGIVVADFNETVTKQLVQGATEMLAKFDLENVDVYHVPGAFEIPFMTKQLLAKKEYDGILTLGAVIKGETDHYDLICQNVASGVMNLNLKSNIPITFGILTTDNIEQAMQRAGLKAGNEGAITAQSLLEMISLNRQIN</sequence>
<protein>
    <recommendedName>
        <fullName evidence="1">6,7-dimethyl-8-ribityllumazine synthase</fullName>
        <shortName evidence="1">DMRL synthase</shortName>
        <shortName evidence="1">LS</shortName>
        <shortName evidence="1">Lumazine synthase</shortName>
        <ecNumber evidence="1">2.5.1.78</ecNumber>
    </recommendedName>
</protein>
<gene>
    <name evidence="1" type="primary">ribH</name>
    <name type="ordered locus">Lreu_0881</name>
</gene>
<comment type="function">
    <text evidence="1">Catalyzes the formation of 6,7-dimethyl-8-ribityllumazine by condensation of 5-amino-6-(D-ribitylamino)uracil with 3,4-dihydroxy-2-butanone 4-phosphate. This is the penultimate step in the biosynthesis of riboflavin.</text>
</comment>
<comment type="catalytic activity">
    <reaction evidence="1">
        <text>(2S)-2-hydroxy-3-oxobutyl phosphate + 5-amino-6-(D-ribitylamino)uracil = 6,7-dimethyl-8-(1-D-ribityl)lumazine + phosphate + 2 H2O + H(+)</text>
        <dbReference type="Rhea" id="RHEA:26152"/>
        <dbReference type="ChEBI" id="CHEBI:15377"/>
        <dbReference type="ChEBI" id="CHEBI:15378"/>
        <dbReference type="ChEBI" id="CHEBI:15934"/>
        <dbReference type="ChEBI" id="CHEBI:43474"/>
        <dbReference type="ChEBI" id="CHEBI:58201"/>
        <dbReference type="ChEBI" id="CHEBI:58830"/>
        <dbReference type="EC" id="2.5.1.78"/>
    </reaction>
</comment>
<comment type="pathway">
    <text evidence="1">Cofactor biosynthesis; riboflavin biosynthesis; riboflavin from 2-hydroxy-3-oxobutyl phosphate and 5-amino-6-(D-ribitylamino)uracil: step 1/2.</text>
</comment>
<comment type="similarity">
    <text evidence="1">Belongs to the DMRL synthase family.</text>
</comment>
<proteinExistence type="inferred from homology"/>
<accession>A5VJX0</accession>
<evidence type="ECO:0000255" key="1">
    <source>
        <dbReference type="HAMAP-Rule" id="MF_00178"/>
    </source>
</evidence>
<name>RISB_LIMRD</name>
<reference key="1">
    <citation type="journal article" date="2011" name="PLoS Genet.">
        <title>The evolution of host specialization in the vertebrate gut symbiont Lactobacillus reuteri.</title>
        <authorList>
            <person name="Frese S.A."/>
            <person name="Benson A.K."/>
            <person name="Tannock G.W."/>
            <person name="Loach D.M."/>
            <person name="Kim J."/>
            <person name="Zhang M."/>
            <person name="Oh P.L."/>
            <person name="Heng N.C."/>
            <person name="Patil P.B."/>
            <person name="Juge N."/>
            <person name="Mackenzie D.A."/>
            <person name="Pearson B.M."/>
            <person name="Lapidus A."/>
            <person name="Dalin E."/>
            <person name="Tice H."/>
            <person name="Goltsman E."/>
            <person name="Land M."/>
            <person name="Hauser L."/>
            <person name="Ivanova N."/>
            <person name="Kyrpides N.C."/>
            <person name="Walter J."/>
        </authorList>
    </citation>
    <scope>NUCLEOTIDE SEQUENCE [LARGE SCALE GENOMIC DNA]</scope>
    <source>
        <strain>DSM 20016</strain>
    </source>
</reference>
<feature type="chain" id="PRO_1000058370" description="6,7-dimethyl-8-ribityllumazine synthase">
    <location>
        <begin position="1"/>
        <end position="152"/>
    </location>
</feature>
<feature type="active site" description="Proton donor" evidence="1">
    <location>
        <position position="86"/>
    </location>
</feature>
<feature type="binding site" evidence="1">
    <location>
        <position position="22"/>
    </location>
    <ligand>
        <name>5-amino-6-(D-ribitylamino)uracil</name>
        <dbReference type="ChEBI" id="CHEBI:15934"/>
    </ligand>
</feature>
<feature type="binding site" evidence="1">
    <location>
        <begin position="54"/>
        <end position="56"/>
    </location>
    <ligand>
        <name>5-amino-6-(D-ribitylamino)uracil</name>
        <dbReference type="ChEBI" id="CHEBI:15934"/>
    </ligand>
</feature>
<feature type="binding site" evidence="1">
    <location>
        <begin position="78"/>
        <end position="80"/>
    </location>
    <ligand>
        <name>5-amino-6-(D-ribitylamino)uracil</name>
        <dbReference type="ChEBI" id="CHEBI:15934"/>
    </ligand>
</feature>
<feature type="binding site" evidence="1">
    <location>
        <begin position="83"/>
        <end position="84"/>
    </location>
    <ligand>
        <name>(2S)-2-hydroxy-3-oxobutyl phosphate</name>
        <dbReference type="ChEBI" id="CHEBI:58830"/>
    </ligand>
</feature>
<feature type="binding site" evidence="1">
    <location>
        <position position="111"/>
    </location>
    <ligand>
        <name>5-amino-6-(D-ribitylamino)uracil</name>
        <dbReference type="ChEBI" id="CHEBI:15934"/>
    </ligand>
</feature>
<feature type="binding site" evidence="1">
    <location>
        <position position="125"/>
    </location>
    <ligand>
        <name>(2S)-2-hydroxy-3-oxobutyl phosphate</name>
        <dbReference type="ChEBI" id="CHEBI:58830"/>
    </ligand>
</feature>